<accession>B4EUQ7</accession>
<sequence>MSRTIFCTFLNKEADGLDFQLYPGELGKRIFNEISKEAWGQWMAKQTMLINEKKLNTMNPDDRKLLEQEMVRFLFEGHDVHIDGYTPPEK</sequence>
<keyword id="KW-0408">Iron</keyword>
<keyword id="KW-1185">Reference proteome</keyword>
<protein>
    <recommendedName>
        <fullName evidence="1">Probable Fe(2+)-trafficking protein</fullName>
    </recommendedName>
</protein>
<gene>
    <name type="ordered locus">PMI0325</name>
</gene>
<proteinExistence type="inferred from homology"/>
<evidence type="ECO:0000255" key="1">
    <source>
        <dbReference type="HAMAP-Rule" id="MF_00686"/>
    </source>
</evidence>
<reference key="1">
    <citation type="journal article" date="2008" name="J. Bacteriol.">
        <title>Complete genome sequence of uropathogenic Proteus mirabilis, a master of both adherence and motility.</title>
        <authorList>
            <person name="Pearson M.M."/>
            <person name="Sebaihia M."/>
            <person name="Churcher C."/>
            <person name="Quail M.A."/>
            <person name="Seshasayee A.S."/>
            <person name="Luscombe N.M."/>
            <person name="Abdellah Z."/>
            <person name="Arrosmith C."/>
            <person name="Atkin B."/>
            <person name="Chillingworth T."/>
            <person name="Hauser H."/>
            <person name="Jagels K."/>
            <person name="Moule S."/>
            <person name="Mungall K."/>
            <person name="Norbertczak H."/>
            <person name="Rabbinowitsch E."/>
            <person name="Walker D."/>
            <person name="Whithead S."/>
            <person name="Thomson N.R."/>
            <person name="Rather P.N."/>
            <person name="Parkhill J."/>
            <person name="Mobley H.L.T."/>
        </authorList>
    </citation>
    <scope>NUCLEOTIDE SEQUENCE [LARGE SCALE GENOMIC DNA]</scope>
    <source>
        <strain>HI4320</strain>
    </source>
</reference>
<feature type="chain" id="PRO_1000131853" description="Probable Fe(2+)-trafficking protein">
    <location>
        <begin position="1"/>
        <end position="90"/>
    </location>
</feature>
<comment type="function">
    <text evidence="1">Could be a mediator in iron transactions between iron acquisition and iron-requiring processes, such as synthesis and/or repair of Fe-S clusters in biosynthetic enzymes.</text>
</comment>
<comment type="subunit">
    <text evidence="1">Monomer.</text>
</comment>
<comment type="similarity">
    <text evidence="1">Belongs to the Fe(2+)-trafficking protein family.</text>
</comment>
<organism>
    <name type="scientific">Proteus mirabilis (strain HI4320)</name>
    <dbReference type="NCBI Taxonomy" id="529507"/>
    <lineage>
        <taxon>Bacteria</taxon>
        <taxon>Pseudomonadati</taxon>
        <taxon>Pseudomonadota</taxon>
        <taxon>Gammaproteobacteria</taxon>
        <taxon>Enterobacterales</taxon>
        <taxon>Morganellaceae</taxon>
        <taxon>Proteus</taxon>
    </lineage>
</organism>
<dbReference type="EMBL" id="AM942759">
    <property type="protein sequence ID" value="CAR40853.1"/>
    <property type="molecule type" value="Genomic_DNA"/>
</dbReference>
<dbReference type="RefSeq" id="WP_004244837.1">
    <property type="nucleotide sequence ID" value="NC_010554.1"/>
</dbReference>
<dbReference type="SMR" id="B4EUQ7"/>
<dbReference type="EnsemblBacteria" id="CAR40853">
    <property type="protein sequence ID" value="CAR40853"/>
    <property type="gene ID" value="PMI0325"/>
</dbReference>
<dbReference type="GeneID" id="6800917"/>
<dbReference type="KEGG" id="pmr:PMI0325"/>
<dbReference type="eggNOG" id="COG2924">
    <property type="taxonomic scope" value="Bacteria"/>
</dbReference>
<dbReference type="HOGENOM" id="CLU_170994_0_0_6"/>
<dbReference type="Proteomes" id="UP000008319">
    <property type="component" value="Chromosome"/>
</dbReference>
<dbReference type="GO" id="GO:0005829">
    <property type="term" value="C:cytosol"/>
    <property type="evidence" value="ECO:0007669"/>
    <property type="project" value="TreeGrafter"/>
</dbReference>
<dbReference type="GO" id="GO:0005506">
    <property type="term" value="F:iron ion binding"/>
    <property type="evidence" value="ECO:0007669"/>
    <property type="project" value="UniProtKB-UniRule"/>
</dbReference>
<dbReference type="GO" id="GO:0034599">
    <property type="term" value="P:cellular response to oxidative stress"/>
    <property type="evidence" value="ECO:0007669"/>
    <property type="project" value="TreeGrafter"/>
</dbReference>
<dbReference type="FunFam" id="1.10.3880.10:FF:000001">
    <property type="entry name" value="Probable Fe(2+)-trafficking protein"/>
    <property type="match status" value="1"/>
</dbReference>
<dbReference type="Gene3D" id="1.10.3880.10">
    <property type="entry name" value="Fe(II) trafficking protein YggX"/>
    <property type="match status" value="1"/>
</dbReference>
<dbReference type="HAMAP" id="MF_00686">
    <property type="entry name" value="Fe_traffic_YggX"/>
    <property type="match status" value="1"/>
</dbReference>
<dbReference type="InterPro" id="IPR007457">
    <property type="entry name" value="Fe_traffick_prot_YggX"/>
</dbReference>
<dbReference type="InterPro" id="IPR036766">
    <property type="entry name" value="Fe_traffick_prot_YggX_sf"/>
</dbReference>
<dbReference type="NCBIfam" id="NF003817">
    <property type="entry name" value="PRK05408.1"/>
    <property type="match status" value="1"/>
</dbReference>
<dbReference type="PANTHER" id="PTHR36965">
    <property type="entry name" value="FE(2+)-TRAFFICKING PROTEIN-RELATED"/>
    <property type="match status" value="1"/>
</dbReference>
<dbReference type="PANTHER" id="PTHR36965:SF1">
    <property type="entry name" value="FE(2+)-TRAFFICKING PROTEIN-RELATED"/>
    <property type="match status" value="1"/>
</dbReference>
<dbReference type="Pfam" id="PF04362">
    <property type="entry name" value="Iron_traffic"/>
    <property type="match status" value="1"/>
</dbReference>
<dbReference type="PIRSF" id="PIRSF029827">
    <property type="entry name" value="Fe_traffic_YggX"/>
    <property type="match status" value="1"/>
</dbReference>
<dbReference type="SUPFAM" id="SSF111148">
    <property type="entry name" value="YggX-like"/>
    <property type="match status" value="1"/>
</dbReference>
<name>FETP_PROMH</name>